<accession>Q70RY0</accession>
<geneLocation type="mitochondrion"/>
<comment type="function">
    <text evidence="1">Core subunit of the mitochondrial membrane respiratory chain NADH dehydrogenase (Complex I) which catalyzes electron transfer from NADH through the respiratory chain, using ubiquinone as an electron acceptor. Part of the enzyme membrane arm which is embedded in the lipid bilayer and involved in proton translocation.</text>
</comment>
<comment type="catalytic activity">
    <reaction evidence="1">
        <text>a ubiquinone + NADH + 5 H(+)(in) = a ubiquinol + NAD(+) + 4 H(+)(out)</text>
        <dbReference type="Rhea" id="RHEA:29091"/>
        <dbReference type="Rhea" id="RHEA-COMP:9565"/>
        <dbReference type="Rhea" id="RHEA-COMP:9566"/>
        <dbReference type="ChEBI" id="CHEBI:15378"/>
        <dbReference type="ChEBI" id="CHEBI:16389"/>
        <dbReference type="ChEBI" id="CHEBI:17976"/>
        <dbReference type="ChEBI" id="CHEBI:57540"/>
        <dbReference type="ChEBI" id="CHEBI:57945"/>
        <dbReference type="EC" id="7.1.1.2"/>
    </reaction>
    <physiologicalReaction direction="left-to-right" evidence="1">
        <dbReference type="Rhea" id="RHEA:29092"/>
    </physiologicalReaction>
</comment>
<comment type="subunit">
    <text evidence="2">Core subunit of respiratory chain NADH dehydrogenase (Complex I) which is composed of 45 different subunits.</text>
</comment>
<comment type="subcellular location">
    <subcellularLocation>
        <location evidence="2">Mitochondrion inner membrane</location>
        <topology evidence="3">Multi-pass membrane protein</topology>
    </subcellularLocation>
</comment>
<comment type="similarity">
    <text evidence="4">Belongs to the complex I subunit 4L family.</text>
</comment>
<reference key="1">
    <citation type="journal article" date="2004" name="Gene">
        <title>Mitogenomic analyses provide new insights into cetacean origin and evolution.</title>
        <authorList>
            <person name="Arnason U."/>
            <person name="Gullberg A."/>
            <person name="Janke A."/>
        </authorList>
    </citation>
    <scope>NUCLEOTIDE SEQUENCE [GENOMIC DNA]</scope>
</reference>
<organism>
    <name type="scientific">Kogia breviceps</name>
    <name type="common">Pygmy sperm whale</name>
    <name type="synonym">Physeter breviceps</name>
    <dbReference type="NCBI Taxonomy" id="27615"/>
    <lineage>
        <taxon>Eukaryota</taxon>
        <taxon>Metazoa</taxon>
        <taxon>Chordata</taxon>
        <taxon>Craniata</taxon>
        <taxon>Vertebrata</taxon>
        <taxon>Euteleostomi</taxon>
        <taxon>Mammalia</taxon>
        <taxon>Eutheria</taxon>
        <taxon>Laurasiatheria</taxon>
        <taxon>Artiodactyla</taxon>
        <taxon>Whippomorpha</taxon>
        <taxon>Cetacea</taxon>
        <taxon>Odontoceti</taxon>
        <taxon>Physeteridae</taxon>
        <taxon>Kogia</taxon>
    </lineage>
</organism>
<dbReference type="EC" id="7.1.1.2"/>
<dbReference type="EMBL" id="AJ554055">
    <property type="protein sequence ID" value="CAD87944.1"/>
    <property type="molecule type" value="Genomic_DNA"/>
</dbReference>
<dbReference type="RefSeq" id="NP_944667.1">
    <property type="nucleotide sequence ID" value="NC_005272.1"/>
</dbReference>
<dbReference type="SMR" id="Q70RY0"/>
<dbReference type="GeneID" id="2658658"/>
<dbReference type="CTD" id="4539"/>
<dbReference type="OrthoDB" id="14164at9721"/>
<dbReference type="GO" id="GO:0005743">
    <property type="term" value="C:mitochondrial inner membrane"/>
    <property type="evidence" value="ECO:0000250"/>
    <property type="project" value="UniProtKB"/>
</dbReference>
<dbReference type="GO" id="GO:0045271">
    <property type="term" value="C:respiratory chain complex I"/>
    <property type="evidence" value="ECO:0000250"/>
    <property type="project" value="UniProtKB"/>
</dbReference>
<dbReference type="GO" id="GO:0008137">
    <property type="term" value="F:NADH dehydrogenase (ubiquinone) activity"/>
    <property type="evidence" value="ECO:0000250"/>
    <property type="project" value="UniProtKB"/>
</dbReference>
<dbReference type="GO" id="GO:0042773">
    <property type="term" value="P:ATP synthesis coupled electron transport"/>
    <property type="evidence" value="ECO:0007669"/>
    <property type="project" value="InterPro"/>
</dbReference>
<dbReference type="FunFam" id="1.10.287.3510:FF:000002">
    <property type="entry name" value="NADH-ubiquinone oxidoreductase chain 4L"/>
    <property type="match status" value="1"/>
</dbReference>
<dbReference type="Gene3D" id="1.10.287.3510">
    <property type="match status" value="1"/>
</dbReference>
<dbReference type="InterPro" id="IPR001133">
    <property type="entry name" value="NADH_UbQ_OxRdtase_chain4L/K"/>
</dbReference>
<dbReference type="InterPro" id="IPR039428">
    <property type="entry name" value="NUOK/Mnh_C1-like"/>
</dbReference>
<dbReference type="PANTHER" id="PTHR11434:SF0">
    <property type="entry name" value="NADH-UBIQUINONE OXIDOREDUCTASE CHAIN 4L"/>
    <property type="match status" value="1"/>
</dbReference>
<dbReference type="PANTHER" id="PTHR11434">
    <property type="entry name" value="NADH-UBIQUINONE OXIDOREDUCTASE SUBUNIT ND4L"/>
    <property type="match status" value="1"/>
</dbReference>
<dbReference type="Pfam" id="PF00420">
    <property type="entry name" value="Oxidored_q2"/>
    <property type="match status" value="1"/>
</dbReference>
<evidence type="ECO:0000250" key="1">
    <source>
        <dbReference type="UniProtKB" id="P03901"/>
    </source>
</evidence>
<evidence type="ECO:0000250" key="2">
    <source>
        <dbReference type="UniProtKB" id="P03902"/>
    </source>
</evidence>
<evidence type="ECO:0000255" key="3"/>
<evidence type="ECO:0000305" key="4"/>
<proteinExistence type="inferred from homology"/>
<name>NU4LM_KOGBR</name>
<gene>
    <name type="primary">MT-ND4L</name>
    <name type="synonym">MTND4L</name>
    <name type="synonym">NADH4L</name>
    <name type="synonym">ND4L</name>
</gene>
<keyword id="KW-0249">Electron transport</keyword>
<keyword id="KW-0472">Membrane</keyword>
<keyword id="KW-0496">Mitochondrion</keyword>
<keyword id="KW-0999">Mitochondrion inner membrane</keyword>
<keyword id="KW-0520">NAD</keyword>
<keyword id="KW-0679">Respiratory chain</keyword>
<keyword id="KW-1278">Translocase</keyword>
<keyword id="KW-0812">Transmembrane</keyword>
<keyword id="KW-1133">Transmembrane helix</keyword>
<keyword id="KW-0813">Transport</keyword>
<keyword id="KW-0830">Ubiquinone</keyword>
<sequence length="98" mass="10777">MPLIHINIMMAFIMSLVGLLMYRSHLMSALLCLEGMMLSLFILTALLALDSHFILASMIPIILLVFAACEAAIGLALLVMISSTYGTDYVQNLNLLRC</sequence>
<feature type="chain" id="PRO_0000275033" description="NADH-ubiquinone oxidoreductase chain 4L">
    <location>
        <begin position="1"/>
        <end position="98"/>
    </location>
</feature>
<feature type="transmembrane region" description="Helical" evidence="3">
    <location>
        <begin position="1"/>
        <end position="21"/>
    </location>
</feature>
<feature type="transmembrane region" description="Helical" evidence="3">
    <location>
        <begin position="29"/>
        <end position="49"/>
    </location>
</feature>
<feature type="transmembrane region" description="Helical" evidence="3">
    <location>
        <begin position="61"/>
        <end position="81"/>
    </location>
</feature>
<protein>
    <recommendedName>
        <fullName>NADH-ubiquinone oxidoreductase chain 4L</fullName>
        <ecNumber>7.1.1.2</ecNumber>
    </recommendedName>
    <alternativeName>
        <fullName>NADH dehydrogenase subunit 4L</fullName>
    </alternativeName>
</protein>